<dbReference type="EC" id="4.98.1.1" evidence="1"/>
<dbReference type="EMBL" id="CP001182">
    <property type="protein sequence ID" value="ACJ39883.1"/>
    <property type="molecule type" value="Genomic_DNA"/>
</dbReference>
<dbReference type="RefSeq" id="WP_000007331.1">
    <property type="nucleotide sequence ID" value="NC_011586.2"/>
</dbReference>
<dbReference type="SMR" id="B7I4A8"/>
<dbReference type="KEGG" id="abn:AB57_0460"/>
<dbReference type="HOGENOM" id="CLU_018884_0_0_6"/>
<dbReference type="UniPathway" id="UPA00252">
    <property type="reaction ID" value="UER00325"/>
</dbReference>
<dbReference type="Proteomes" id="UP000007094">
    <property type="component" value="Chromosome"/>
</dbReference>
<dbReference type="GO" id="GO:0005737">
    <property type="term" value="C:cytoplasm"/>
    <property type="evidence" value="ECO:0007669"/>
    <property type="project" value="UniProtKB-SubCell"/>
</dbReference>
<dbReference type="GO" id="GO:0004325">
    <property type="term" value="F:ferrochelatase activity"/>
    <property type="evidence" value="ECO:0007669"/>
    <property type="project" value="UniProtKB-UniRule"/>
</dbReference>
<dbReference type="GO" id="GO:0046872">
    <property type="term" value="F:metal ion binding"/>
    <property type="evidence" value="ECO:0007669"/>
    <property type="project" value="UniProtKB-KW"/>
</dbReference>
<dbReference type="GO" id="GO:0006783">
    <property type="term" value="P:heme biosynthetic process"/>
    <property type="evidence" value="ECO:0007669"/>
    <property type="project" value="UniProtKB-UniRule"/>
</dbReference>
<dbReference type="CDD" id="cd00419">
    <property type="entry name" value="Ferrochelatase_C"/>
    <property type="match status" value="1"/>
</dbReference>
<dbReference type="CDD" id="cd03411">
    <property type="entry name" value="Ferrochelatase_N"/>
    <property type="match status" value="1"/>
</dbReference>
<dbReference type="FunFam" id="3.40.50.1400:FF:000002">
    <property type="entry name" value="Ferrochelatase"/>
    <property type="match status" value="1"/>
</dbReference>
<dbReference type="Gene3D" id="3.40.50.1400">
    <property type="match status" value="2"/>
</dbReference>
<dbReference type="HAMAP" id="MF_00323">
    <property type="entry name" value="Ferrochelatase"/>
    <property type="match status" value="1"/>
</dbReference>
<dbReference type="InterPro" id="IPR001015">
    <property type="entry name" value="Ferrochelatase"/>
</dbReference>
<dbReference type="InterPro" id="IPR019772">
    <property type="entry name" value="Ferrochelatase_AS"/>
</dbReference>
<dbReference type="InterPro" id="IPR033644">
    <property type="entry name" value="Ferrochelatase_C"/>
</dbReference>
<dbReference type="InterPro" id="IPR033659">
    <property type="entry name" value="Ferrochelatase_N"/>
</dbReference>
<dbReference type="NCBIfam" id="TIGR00109">
    <property type="entry name" value="hemH"/>
    <property type="match status" value="1"/>
</dbReference>
<dbReference type="PANTHER" id="PTHR11108">
    <property type="entry name" value="FERROCHELATASE"/>
    <property type="match status" value="1"/>
</dbReference>
<dbReference type="PANTHER" id="PTHR11108:SF1">
    <property type="entry name" value="FERROCHELATASE, MITOCHONDRIAL"/>
    <property type="match status" value="1"/>
</dbReference>
<dbReference type="Pfam" id="PF00762">
    <property type="entry name" value="Ferrochelatase"/>
    <property type="match status" value="1"/>
</dbReference>
<dbReference type="SUPFAM" id="SSF53800">
    <property type="entry name" value="Chelatase"/>
    <property type="match status" value="1"/>
</dbReference>
<dbReference type="PROSITE" id="PS00534">
    <property type="entry name" value="FERROCHELATASE"/>
    <property type="match status" value="1"/>
</dbReference>
<accession>B7I4A8</accession>
<sequence>MSFEQKPKVTVILANLGTPDEATVPAVRRFLKQFLSDPRVIEIPKFIWWIILNLFVLPFRPKRVAHAYASVWSTDSPMREIVFEQTQRVQAYLERENKQFDLTVLPAMTYGNPGIDAVLEKLATNPQEHVILLPLFPQYSATSTAPLYDAFAKWIPTQRNLPGLTIIKDYYQHPMFIQALAESVLAYQEQHGKPEKLLMSFHGIPQPYADKGDPYADRCRITAKLVAEALHLKDDEWAISFQSRFGKQEWVKPYTDQLLQDWAKQGVKSVQVLSPAFSADCLETLEELAIQNAELFQQAGGGSYAYIPALNSDQAHIDLLAGLVQANLDALTHTLAHR</sequence>
<evidence type="ECO:0000255" key="1">
    <source>
        <dbReference type="HAMAP-Rule" id="MF_00323"/>
    </source>
</evidence>
<comment type="function">
    <text evidence="1">Catalyzes the ferrous insertion into protoporphyrin IX.</text>
</comment>
<comment type="catalytic activity">
    <reaction evidence="1">
        <text>heme b + 2 H(+) = protoporphyrin IX + Fe(2+)</text>
        <dbReference type="Rhea" id="RHEA:22584"/>
        <dbReference type="ChEBI" id="CHEBI:15378"/>
        <dbReference type="ChEBI" id="CHEBI:29033"/>
        <dbReference type="ChEBI" id="CHEBI:57306"/>
        <dbReference type="ChEBI" id="CHEBI:60344"/>
        <dbReference type="EC" id="4.98.1.1"/>
    </reaction>
</comment>
<comment type="pathway">
    <text evidence="1">Porphyrin-containing compound metabolism; protoheme biosynthesis; protoheme from protoporphyrin-IX: step 1/1.</text>
</comment>
<comment type="subcellular location">
    <subcellularLocation>
        <location evidence="1">Cytoplasm</location>
    </subcellularLocation>
</comment>
<comment type="similarity">
    <text evidence="1">Belongs to the ferrochelatase family.</text>
</comment>
<keyword id="KW-0963">Cytoplasm</keyword>
<keyword id="KW-0350">Heme biosynthesis</keyword>
<keyword id="KW-0408">Iron</keyword>
<keyword id="KW-0456">Lyase</keyword>
<keyword id="KW-0479">Metal-binding</keyword>
<keyword id="KW-0627">Porphyrin biosynthesis</keyword>
<reference key="1">
    <citation type="journal article" date="2008" name="J. Bacteriol.">
        <title>Comparative genome sequence analysis of multidrug-resistant Acinetobacter baumannii.</title>
        <authorList>
            <person name="Adams M.D."/>
            <person name="Goglin K."/>
            <person name="Molyneaux N."/>
            <person name="Hujer K.M."/>
            <person name="Lavender H."/>
            <person name="Jamison J.J."/>
            <person name="MacDonald I.J."/>
            <person name="Martin K.M."/>
            <person name="Russo T."/>
            <person name="Campagnari A.A."/>
            <person name="Hujer A.M."/>
            <person name="Bonomo R.A."/>
            <person name="Gill S.R."/>
        </authorList>
    </citation>
    <scope>NUCLEOTIDE SEQUENCE [LARGE SCALE GENOMIC DNA]</scope>
    <source>
        <strain>AB0057</strain>
    </source>
</reference>
<proteinExistence type="inferred from homology"/>
<gene>
    <name evidence="1" type="primary">hemH</name>
    <name type="ordered locus">AB57_0460</name>
</gene>
<protein>
    <recommendedName>
        <fullName evidence="1">Ferrochelatase</fullName>
        <ecNumber evidence="1">4.98.1.1</ecNumber>
    </recommendedName>
    <alternativeName>
        <fullName evidence="1">Heme synthase</fullName>
    </alternativeName>
    <alternativeName>
        <fullName evidence="1">Protoheme ferro-lyase</fullName>
    </alternativeName>
</protein>
<organism>
    <name type="scientific">Acinetobacter baumannii (strain AB0057)</name>
    <dbReference type="NCBI Taxonomy" id="480119"/>
    <lineage>
        <taxon>Bacteria</taxon>
        <taxon>Pseudomonadati</taxon>
        <taxon>Pseudomonadota</taxon>
        <taxon>Gammaproteobacteria</taxon>
        <taxon>Moraxellales</taxon>
        <taxon>Moraxellaceae</taxon>
        <taxon>Acinetobacter</taxon>
        <taxon>Acinetobacter calcoaceticus/baumannii complex</taxon>
    </lineage>
</organism>
<feature type="chain" id="PRO_1000119600" description="Ferrochelatase">
    <location>
        <begin position="1"/>
        <end position="338"/>
    </location>
</feature>
<feature type="binding site" evidence="1">
    <location>
        <position position="202"/>
    </location>
    <ligand>
        <name>Fe cation</name>
        <dbReference type="ChEBI" id="CHEBI:24875"/>
    </ligand>
</feature>
<feature type="binding site" evidence="1">
    <location>
        <position position="283"/>
    </location>
    <ligand>
        <name>Fe cation</name>
        <dbReference type="ChEBI" id="CHEBI:24875"/>
    </ligand>
</feature>
<name>HEMH_ACIB5</name>